<feature type="chain" id="PRO_0000418598" description="Bifunctional cystathionine gamma-lyase/cysteine synthase">
    <location>
        <begin position="1"/>
        <end position="323"/>
    </location>
</feature>
<feature type="binding site" evidence="1">
    <location>
        <position position="79"/>
    </location>
    <ligand>
        <name>pyridoxal 5'-phosphate</name>
        <dbReference type="ChEBI" id="CHEBI:597326"/>
    </ligand>
</feature>
<feature type="binding site" evidence="1">
    <location>
        <begin position="183"/>
        <end position="187"/>
    </location>
    <ligand>
        <name>pyridoxal 5'-phosphate</name>
        <dbReference type="ChEBI" id="CHEBI:597326"/>
    </ligand>
</feature>
<feature type="binding site" evidence="1">
    <location>
        <position position="271"/>
    </location>
    <ligand>
        <name>pyridoxal 5'-phosphate</name>
        <dbReference type="ChEBI" id="CHEBI:597326"/>
    </ligand>
</feature>
<feature type="modified residue" description="N6-(pyridoxal phosphate)lysine" evidence="1">
    <location>
        <position position="48"/>
    </location>
</feature>
<accession>F4K5T2</accession>
<organism>
    <name type="scientific">Arabidopsis thaliana</name>
    <name type="common">Mouse-ear cress</name>
    <dbReference type="NCBI Taxonomy" id="3702"/>
    <lineage>
        <taxon>Eukaryota</taxon>
        <taxon>Viridiplantae</taxon>
        <taxon>Streptophyta</taxon>
        <taxon>Embryophyta</taxon>
        <taxon>Tracheophyta</taxon>
        <taxon>Spermatophyta</taxon>
        <taxon>Magnoliopsida</taxon>
        <taxon>eudicotyledons</taxon>
        <taxon>Gunneridae</taxon>
        <taxon>Pentapetalae</taxon>
        <taxon>rosids</taxon>
        <taxon>malvids</taxon>
        <taxon>Brassicales</taxon>
        <taxon>Brassicaceae</taxon>
        <taxon>Camelineae</taxon>
        <taxon>Arabidopsis</taxon>
    </lineage>
</organism>
<keyword id="KW-0028">Amino-acid biosynthesis</keyword>
<keyword id="KW-0198">Cysteine biosynthesis</keyword>
<keyword id="KW-0963">Cytoplasm</keyword>
<keyword id="KW-0456">Lyase</keyword>
<keyword id="KW-0663">Pyridoxal phosphate</keyword>
<keyword id="KW-1185">Reference proteome</keyword>
<keyword id="KW-0808">Transferase</keyword>
<evidence type="ECO:0000250" key="1"/>
<evidence type="ECO:0000269" key="2">
    <source>
    </source>
</evidence>
<evidence type="ECO:0000269" key="3">
    <source>
    </source>
</evidence>
<evidence type="ECO:0000269" key="4">
    <source>
    </source>
</evidence>
<evidence type="ECO:0000269" key="5">
    <source>
    </source>
</evidence>
<evidence type="ECO:0000269" key="6">
    <source>
    </source>
</evidence>
<evidence type="ECO:0000305" key="7"/>
<comment type="function">
    <text evidence="3 4 6">Involved in maintaining Cys homeostasis through the desulfuration of L-cysteine. Modulates the generation of the signaling molecule sulfide in plant cytosol. Probably unable to interact with SAT and to form the decameric Cys synthase complex (CSC) and is therefore not an enzymatically true OASTL protein.</text>
</comment>
<comment type="catalytic activity">
    <reaction evidence="4">
        <text>L,L-cystathionine + H2O = 2-oxobutanoate + L-cysteine + NH4(+)</text>
        <dbReference type="Rhea" id="RHEA:14005"/>
        <dbReference type="ChEBI" id="CHEBI:15377"/>
        <dbReference type="ChEBI" id="CHEBI:16763"/>
        <dbReference type="ChEBI" id="CHEBI:28938"/>
        <dbReference type="ChEBI" id="CHEBI:35235"/>
        <dbReference type="ChEBI" id="CHEBI:58161"/>
        <dbReference type="EC" id="4.4.1.1"/>
    </reaction>
</comment>
<comment type="catalytic activity">
    <reaction evidence="4">
        <text>O-acetyl-L-serine + hydrogen sulfide = L-cysteine + acetate</text>
        <dbReference type="Rhea" id="RHEA:14829"/>
        <dbReference type="ChEBI" id="CHEBI:29919"/>
        <dbReference type="ChEBI" id="CHEBI:30089"/>
        <dbReference type="ChEBI" id="CHEBI:35235"/>
        <dbReference type="ChEBI" id="CHEBI:58340"/>
        <dbReference type="EC" id="2.5.1.47"/>
    </reaction>
</comment>
<comment type="cofactor">
    <cofactor evidence="4">
        <name>pyridoxal 5'-phosphate</name>
        <dbReference type="ChEBI" id="CHEBI:597326"/>
    </cofactor>
</comment>
<comment type="activity regulation">
    <text evidence="4">Inhibited by aminooxyacetate.</text>
</comment>
<comment type="biophysicochemical properties">
    <kinetics>
        <KM evidence="4">0.4 mM for L-cysteine for the cystathionine gamma-lyase activity</KM>
        <KM evidence="4">5.2 mM for O(3)-acetyl-L-serine for the cysteine synthase activity</KM>
        <Vmax evidence="4">0.04 umol/min/mg enzyme for the DES reaction</Vmax>
        <Vmax evidence="4">1.8 umol/min/mg enzyme for the OASTL reaction</Vmax>
    </kinetics>
</comment>
<comment type="pathway">
    <text>Amino-acid biosynthesis; L-cysteine biosynthesis; L-cysteine from L-serine: step 2/2.</text>
</comment>
<comment type="subunit">
    <text evidence="1">Homodimer.</text>
</comment>
<comment type="subcellular location">
    <subcellularLocation>
        <location evidence="7">Cytoplasm</location>
    </subcellularLocation>
</comment>
<comment type="disruption phenotype">
    <text evidence="2 4 5">No visible phenotype. Light early-flowering and premature leaf senescence phenotype. Increased total cysteine content and increased resistance to pathogens.</text>
</comment>
<comment type="similarity">
    <text evidence="7">Belongs to the cysteine synthase/cystathionine beta-synthase family.</text>
</comment>
<gene>
    <name type="primary">DES1</name>
    <name type="ordered locus">At5g28030</name>
    <name type="ORF">F15F15.100</name>
</gene>
<dbReference type="EC" id="2.5.1.47" evidence="4"/>
<dbReference type="EC" id="4.4.1.1" evidence="4"/>
<dbReference type="EMBL" id="AC007627">
    <property type="status" value="NOT_ANNOTATED_CDS"/>
    <property type="molecule type" value="Genomic_DNA"/>
</dbReference>
<dbReference type="EMBL" id="CP002688">
    <property type="protein sequence ID" value="AED93765.1"/>
    <property type="molecule type" value="Genomic_DNA"/>
</dbReference>
<dbReference type="EMBL" id="CP002688">
    <property type="protein sequence ID" value="AED93766.1"/>
    <property type="molecule type" value="Genomic_DNA"/>
</dbReference>
<dbReference type="EMBL" id="CP002688">
    <property type="protein sequence ID" value="ANM68869.1"/>
    <property type="molecule type" value="Genomic_DNA"/>
</dbReference>
<dbReference type="EMBL" id="CP002688">
    <property type="protein sequence ID" value="ANM68870.1"/>
    <property type="molecule type" value="Genomic_DNA"/>
</dbReference>
<dbReference type="RefSeq" id="NP_001330587.1">
    <property type="nucleotide sequence ID" value="NM_001344055.1"/>
</dbReference>
<dbReference type="RefSeq" id="NP_001330588.1">
    <property type="nucleotide sequence ID" value="NM_001344054.1"/>
</dbReference>
<dbReference type="RefSeq" id="NP_198155.1">
    <property type="nucleotide sequence ID" value="NM_122686.2"/>
</dbReference>
<dbReference type="RefSeq" id="NP_974843.1">
    <property type="nucleotide sequence ID" value="NM_203114.2"/>
</dbReference>
<dbReference type="SMR" id="F4K5T2"/>
<dbReference type="FunCoup" id="F4K5T2">
    <property type="interactions" value="1063"/>
</dbReference>
<dbReference type="STRING" id="3702.F4K5T2"/>
<dbReference type="PaxDb" id="3702-AT5G28030.1"/>
<dbReference type="ProteomicsDB" id="222075"/>
<dbReference type="EnsemblPlants" id="AT5G28030.1">
    <property type="protein sequence ID" value="AT5G28030.1"/>
    <property type="gene ID" value="AT5G28030"/>
</dbReference>
<dbReference type="EnsemblPlants" id="AT5G28030.2">
    <property type="protein sequence ID" value="AT5G28030.2"/>
    <property type="gene ID" value="AT5G28030"/>
</dbReference>
<dbReference type="EnsemblPlants" id="AT5G28030.4">
    <property type="protein sequence ID" value="AT5G28030.4"/>
    <property type="gene ID" value="AT5G28030"/>
</dbReference>
<dbReference type="EnsemblPlants" id="AT5G28030.5">
    <property type="protein sequence ID" value="AT5G28030.5"/>
    <property type="gene ID" value="AT5G28030"/>
</dbReference>
<dbReference type="GeneID" id="832873"/>
<dbReference type="Gramene" id="AT5G28030.1">
    <property type="protein sequence ID" value="AT5G28030.1"/>
    <property type="gene ID" value="AT5G28030"/>
</dbReference>
<dbReference type="Gramene" id="AT5G28030.2">
    <property type="protein sequence ID" value="AT5G28030.2"/>
    <property type="gene ID" value="AT5G28030"/>
</dbReference>
<dbReference type="Gramene" id="AT5G28030.4">
    <property type="protein sequence ID" value="AT5G28030.4"/>
    <property type="gene ID" value="AT5G28030"/>
</dbReference>
<dbReference type="Gramene" id="AT5G28030.5">
    <property type="protein sequence ID" value="AT5G28030.5"/>
    <property type="gene ID" value="AT5G28030"/>
</dbReference>
<dbReference type="KEGG" id="ath:AT5G28030"/>
<dbReference type="Araport" id="AT5G28030"/>
<dbReference type="TAIR" id="AT5G28030">
    <property type="gene designation" value="DES1"/>
</dbReference>
<dbReference type="eggNOG" id="KOG1252">
    <property type="taxonomic scope" value="Eukaryota"/>
</dbReference>
<dbReference type="HOGENOM" id="CLU_021018_1_1_1"/>
<dbReference type="InParanoid" id="F4K5T2"/>
<dbReference type="OMA" id="IPGAMDF"/>
<dbReference type="PhylomeDB" id="F4K5T2"/>
<dbReference type="BRENDA" id="4.4.1.28">
    <property type="organism ID" value="399"/>
</dbReference>
<dbReference type="SABIO-RK" id="F4K5T2"/>
<dbReference type="UniPathway" id="UPA00136">
    <property type="reaction ID" value="UER00200"/>
</dbReference>
<dbReference type="PRO" id="PR:F4K5T2"/>
<dbReference type="Proteomes" id="UP000006548">
    <property type="component" value="Chromosome 5"/>
</dbReference>
<dbReference type="ExpressionAtlas" id="F4K5T2">
    <property type="expression patterns" value="baseline and differential"/>
</dbReference>
<dbReference type="GO" id="GO:0005737">
    <property type="term" value="C:cytoplasm"/>
    <property type="evidence" value="ECO:0007669"/>
    <property type="project" value="UniProtKB-SubCell"/>
</dbReference>
<dbReference type="GO" id="GO:0004123">
    <property type="term" value="F:cystathionine gamma-lyase activity"/>
    <property type="evidence" value="ECO:0007669"/>
    <property type="project" value="RHEA"/>
</dbReference>
<dbReference type="GO" id="GO:0004124">
    <property type="term" value="F:cysteine synthase activity"/>
    <property type="evidence" value="ECO:0000314"/>
    <property type="project" value="UniProtKB"/>
</dbReference>
<dbReference type="GO" id="GO:0080146">
    <property type="term" value="F:L-cysteine desulfhydrase activity"/>
    <property type="evidence" value="ECO:0000314"/>
    <property type="project" value="UniProtKB"/>
</dbReference>
<dbReference type="GO" id="GO:0030170">
    <property type="term" value="F:pyridoxal phosphate binding"/>
    <property type="evidence" value="ECO:0000314"/>
    <property type="project" value="UniProtKB"/>
</dbReference>
<dbReference type="GO" id="GO:0006535">
    <property type="term" value="P:cysteine biosynthetic process from serine"/>
    <property type="evidence" value="ECO:0007669"/>
    <property type="project" value="InterPro"/>
</dbReference>
<dbReference type="GO" id="GO:0080145">
    <property type="term" value="P:intracellular cysteine homeostasis"/>
    <property type="evidence" value="ECO:0000314"/>
    <property type="project" value="UniProtKB"/>
</dbReference>
<dbReference type="GO" id="GO:0006979">
    <property type="term" value="P:response to oxidative stress"/>
    <property type="evidence" value="ECO:0000315"/>
    <property type="project" value="TAIR"/>
</dbReference>
<dbReference type="GO" id="GO:1990170">
    <property type="term" value="P:stress response to cadmium ion"/>
    <property type="evidence" value="ECO:0000315"/>
    <property type="project" value="TAIR"/>
</dbReference>
<dbReference type="CDD" id="cd01561">
    <property type="entry name" value="CBS_like"/>
    <property type="match status" value="1"/>
</dbReference>
<dbReference type="FunFam" id="3.40.50.1100:FF:000006">
    <property type="entry name" value="Cysteine synthase"/>
    <property type="match status" value="1"/>
</dbReference>
<dbReference type="FunFam" id="3.40.50.1100:FF:000130">
    <property type="entry name" value="Cysteine synthase"/>
    <property type="match status" value="1"/>
</dbReference>
<dbReference type="Gene3D" id="3.40.50.1100">
    <property type="match status" value="2"/>
</dbReference>
<dbReference type="InterPro" id="IPR005856">
    <property type="entry name" value="Cys_synth"/>
</dbReference>
<dbReference type="InterPro" id="IPR050214">
    <property type="entry name" value="Cys_Synth/Cystath_Beta-Synth"/>
</dbReference>
<dbReference type="InterPro" id="IPR005859">
    <property type="entry name" value="CysK"/>
</dbReference>
<dbReference type="InterPro" id="IPR001216">
    <property type="entry name" value="P-phosphate_BS"/>
</dbReference>
<dbReference type="InterPro" id="IPR001926">
    <property type="entry name" value="TrpB-like_PALP"/>
</dbReference>
<dbReference type="InterPro" id="IPR036052">
    <property type="entry name" value="TrpB-like_PALP_sf"/>
</dbReference>
<dbReference type="NCBIfam" id="TIGR01139">
    <property type="entry name" value="cysK"/>
    <property type="match status" value="1"/>
</dbReference>
<dbReference type="NCBIfam" id="TIGR01136">
    <property type="entry name" value="cysKM"/>
    <property type="match status" value="1"/>
</dbReference>
<dbReference type="PANTHER" id="PTHR10314">
    <property type="entry name" value="CYSTATHIONINE BETA-SYNTHASE"/>
    <property type="match status" value="1"/>
</dbReference>
<dbReference type="Pfam" id="PF00291">
    <property type="entry name" value="PALP"/>
    <property type="match status" value="1"/>
</dbReference>
<dbReference type="SUPFAM" id="SSF53686">
    <property type="entry name" value="Tryptophan synthase beta subunit-like PLP-dependent enzymes"/>
    <property type="match status" value="1"/>
</dbReference>
<dbReference type="PROSITE" id="PS00901">
    <property type="entry name" value="CYS_SYNTHASE"/>
    <property type="match status" value="1"/>
</dbReference>
<protein>
    <recommendedName>
        <fullName>Bifunctional cystathionine gamma-lyase/cysteine synthase</fullName>
        <ecNumber evidence="4">2.5.1.47</ecNumber>
        <ecNumber evidence="4">4.4.1.1</ecNumber>
    </recommendedName>
    <alternativeName>
        <fullName>Beta-substituted Ala synthase 4;3</fullName>
        <shortName>ARAth-Bsas4;3</shortName>
    </alternativeName>
    <alternativeName>
        <fullName>L-cysteine desulfhydrase 1</fullName>
        <shortName>DES1</shortName>
    </alternativeName>
    <alternativeName>
        <fullName>O-acetylserine (thiol)-lyase</fullName>
        <shortName>OASTL</shortName>
    </alternativeName>
    <alternativeName>
        <fullName>Protein CS-LIKE</fullName>
    </alternativeName>
</protein>
<proteinExistence type="evidence at protein level"/>
<reference key="1">
    <citation type="journal article" date="2000" name="Nature">
        <title>Sequence and analysis of chromosome 5 of the plant Arabidopsis thaliana.</title>
        <authorList>
            <person name="Tabata S."/>
            <person name="Kaneko T."/>
            <person name="Nakamura Y."/>
            <person name="Kotani H."/>
            <person name="Kato T."/>
            <person name="Asamizu E."/>
            <person name="Miyajima N."/>
            <person name="Sasamoto S."/>
            <person name="Kimura T."/>
            <person name="Hosouchi T."/>
            <person name="Kawashima K."/>
            <person name="Kohara M."/>
            <person name="Matsumoto M."/>
            <person name="Matsuno A."/>
            <person name="Muraki A."/>
            <person name="Nakayama S."/>
            <person name="Nakazaki N."/>
            <person name="Naruo K."/>
            <person name="Okumura S."/>
            <person name="Shinpo S."/>
            <person name="Takeuchi C."/>
            <person name="Wada T."/>
            <person name="Watanabe A."/>
            <person name="Yamada M."/>
            <person name="Yasuda M."/>
            <person name="Sato S."/>
            <person name="de la Bastide M."/>
            <person name="Huang E."/>
            <person name="Spiegel L."/>
            <person name="Gnoj L."/>
            <person name="O'Shaughnessy A."/>
            <person name="Preston R."/>
            <person name="Habermann K."/>
            <person name="Murray J."/>
            <person name="Johnson D."/>
            <person name="Rohlfing T."/>
            <person name="Nelson J."/>
            <person name="Stoneking T."/>
            <person name="Pepin K."/>
            <person name="Spieth J."/>
            <person name="Sekhon M."/>
            <person name="Armstrong J."/>
            <person name="Becker M."/>
            <person name="Belter E."/>
            <person name="Cordum H."/>
            <person name="Cordes M."/>
            <person name="Courtney L."/>
            <person name="Courtney W."/>
            <person name="Dante M."/>
            <person name="Du H."/>
            <person name="Edwards J."/>
            <person name="Fryman J."/>
            <person name="Haakensen B."/>
            <person name="Lamar E."/>
            <person name="Latreille P."/>
            <person name="Leonard S."/>
            <person name="Meyer R."/>
            <person name="Mulvaney E."/>
            <person name="Ozersky P."/>
            <person name="Riley A."/>
            <person name="Strowmatt C."/>
            <person name="Wagner-McPherson C."/>
            <person name="Wollam A."/>
            <person name="Yoakum M."/>
            <person name="Bell M."/>
            <person name="Dedhia N."/>
            <person name="Parnell L."/>
            <person name="Shah R."/>
            <person name="Rodriguez M."/>
            <person name="Hoon See L."/>
            <person name="Vil D."/>
            <person name="Baker J."/>
            <person name="Kirchoff K."/>
            <person name="Toth K."/>
            <person name="King L."/>
            <person name="Bahret A."/>
            <person name="Miller B."/>
            <person name="Marra M.A."/>
            <person name="Martienssen R."/>
            <person name="McCombie W.R."/>
            <person name="Wilson R.K."/>
            <person name="Murphy G."/>
            <person name="Bancroft I."/>
            <person name="Volckaert G."/>
            <person name="Wambutt R."/>
            <person name="Duesterhoeft A."/>
            <person name="Stiekema W."/>
            <person name="Pohl T."/>
            <person name="Entian K.-D."/>
            <person name="Terryn N."/>
            <person name="Hartley N."/>
            <person name="Bent E."/>
            <person name="Johnson S."/>
            <person name="Langham S.-A."/>
            <person name="McCullagh B."/>
            <person name="Robben J."/>
            <person name="Grymonprez B."/>
            <person name="Zimmermann W."/>
            <person name="Ramsperger U."/>
            <person name="Wedler H."/>
            <person name="Balke K."/>
            <person name="Wedler E."/>
            <person name="Peters S."/>
            <person name="van Staveren M."/>
            <person name="Dirkse W."/>
            <person name="Mooijman P."/>
            <person name="Klein Lankhorst R."/>
            <person name="Weitzenegger T."/>
            <person name="Bothe G."/>
            <person name="Rose M."/>
            <person name="Hauf J."/>
            <person name="Berneiser S."/>
            <person name="Hempel S."/>
            <person name="Feldpausch M."/>
            <person name="Lamberth S."/>
            <person name="Villarroel R."/>
            <person name="Gielen J."/>
            <person name="Ardiles W."/>
            <person name="Bents O."/>
            <person name="Lemcke K."/>
            <person name="Kolesov G."/>
            <person name="Mayer K.F.X."/>
            <person name="Rudd S."/>
            <person name="Schoof H."/>
            <person name="Schueller C."/>
            <person name="Zaccaria P."/>
            <person name="Mewes H.-W."/>
            <person name="Bevan M."/>
            <person name="Fransz P.F."/>
        </authorList>
    </citation>
    <scope>NUCLEOTIDE SEQUENCE [LARGE SCALE GENOMIC DNA]</scope>
    <source>
        <strain>cv. Columbia</strain>
    </source>
</reference>
<reference key="2">
    <citation type="journal article" date="2017" name="Plant J.">
        <title>Araport11: a complete reannotation of the Arabidopsis thaliana reference genome.</title>
        <authorList>
            <person name="Cheng C.Y."/>
            <person name="Krishnakumar V."/>
            <person name="Chan A.P."/>
            <person name="Thibaud-Nissen F."/>
            <person name="Schobel S."/>
            <person name="Town C.D."/>
        </authorList>
    </citation>
    <scope>GENOME REANNOTATION</scope>
    <source>
        <strain>cv. Columbia</strain>
    </source>
</reference>
<reference key="3">
    <citation type="journal article" date="2000" name="Plant Physiol.">
        <title>beta-Cyanoalanine synthase is a mitochondrial cysteine synthase-like protein in spinach and Arabidopsis.</title>
        <authorList>
            <person name="Hatzfeld Y."/>
            <person name="Maruyama A."/>
            <person name="Schmidt A."/>
            <person name="Noji M."/>
            <person name="Ishizawa K."/>
            <person name="Saito K."/>
        </authorList>
    </citation>
    <scope>NOMENCLATURE</scope>
</reference>
<reference key="4">
    <citation type="journal article" date="2005" name="Photosyn. Res.">
        <title>Synthesis of the sulfur amino acids: cysteine and methionine.</title>
        <authorList>
            <person name="Wirtz M."/>
            <person name="Droux M."/>
        </authorList>
    </citation>
    <scope>REVIEW</scope>
</reference>
<reference key="5">
    <citation type="journal article" date="2008" name="Plant Cell">
        <title>Analysis of the Arabidopsis O-acetylserine(thiol)lyase gene family demonstrates compartment-specific differences in the regulation of cysteine synthesis.</title>
        <authorList>
            <person name="Heeg C."/>
            <person name="Kruse C."/>
            <person name="Jost R."/>
            <person name="Gutensohn M."/>
            <person name="Ruppert T."/>
            <person name="Wirtz M."/>
            <person name="Hell R."/>
        </authorList>
    </citation>
    <scope>FUNCTION</scope>
</reference>
<reference key="6">
    <citation type="journal article" date="2008" name="Plant Physiol.">
        <title>Physiological roles of the beta-substituted alanine synthase gene family in Arabidopsis.</title>
        <authorList>
            <person name="Watanabe M."/>
            <person name="Kusano M."/>
            <person name="Oikawa A."/>
            <person name="Fukushima A."/>
            <person name="Noji M."/>
            <person name="Saito K."/>
        </authorList>
    </citation>
    <scope>GENE FAMILY</scope>
    <scope>DISRUPTION PHENOTYPE</scope>
</reference>
<reference key="7">
    <citation type="journal article" date="2010" name="Plant Physiol.">
        <title>An O-acetylserine(thiol)lyase homolog with L-cysteine desulfhydrase activity regulates cysteine homeostasis in Arabidopsis.</title>
        <authorList>
            <person name="Alvarez C."/>
            <person name="Calo L."/>
            <person name="Romero L.C."/>
            <person name="Garcia I."/>
            <person name="Gotor C."/>
        </authorList>
    </citation>
    <scope>FUNCTION</scope>
    <scope>CATALYTIC ACTIVITY</scope>
    <scope>COFACTOR</scope>
    <scope>BIOPHYSICOCHEMICAL PROPERTIES</scope>
    <scope>ACTIVITY REGULATION</scope>
    <scope>DISRUPTION PHENOTYPE</scope>
</reference>
<reference key="8">
    <citation type="journal article" date="2012" name="New Phytol.">
        <title>Cysteine homeostasis plays an essential role in plant immunity.</title>
        <authorList>
            <person name="Alvarez C."/>
            <person name="Bermudez M.A."/>
            <person name="Romero L.C."/>
            <person name="Gotor C."/>
            <person name="Garcia I."/>
        </authorList>
    </citation>
    <scope>DISRUPTION PHENOTYPE</scope>
</reference>
<reference key="9">
    <citation type="journal article" date="2013" name="Plant Signal. Behav.">
        <title>L-Cysteine Desulfhydrase 1 modulates the generation of the signaling molecule sulfide in plant cytosol.</title>
        <authorList>
            <person name="Romero L.C."/>
            <person name="Garcia I."/>
            <person name="Gotor C."/>
        </authorList>
    </citation>
    <scope>FUNCTION</scope>
</reference>
<sequence>MEDRVLIKNDVTELIGNTPMVYLNKIVDGCVARIAAKLEMMEPCSSIKDRIAYSMIKDAEDKGLITPGKSTLIEATGGNTGIGLASIGASRGYKVILLMPSTMSLERRIILRALGAEVHLTDISIGIKGQLEKAKEILSKTPGGYIPHQFINPENPEIHYRTTGPEIWRDSAGKVDILVAGVGTGGTVTGTGKFLKEKNKDIKVCVVEPSESAVLSGGKPGPHLIQGIGSGEIPANLDLSIVDEIIQVTGEEAIETTKLLAIKEGLLVGISSGASAAAALKVAKRPENVGKLIVVIFPSGGERYLSTELFESVRYEAENLPVE</sequence>
<name>CGL_ARATH</name>